<keyword id="KW-0131">Cell cycle</keyword>
<keyword id="KW-0132">Cell division</keyword>
<keyword id="KW-0143">Chaperone</keyword>
<keyword id="KW-0963">Cytoplasm</keyword>
<keyword id="KW-0413">Isomerase</keyword>
<keyword id="KW-1185">Reference proteome</keyword>
<keyword id="KW-0697">Rotamase</keyword>
<proteinExistence type="inferred from homology"/>
<accession>Q8XYP8</accession>
<name>TIG_RALN1</name>
<evidence type="ECO:0000255" key="1">
    <source>
        <dbReference type="HAMAP-Rule" id="MF_00303"/>
    </source>
</evidence>
<feature type="chain" id="PRO_0000179410" description="Trigger factor">
    <location>
        <begin position="1"/>
        <end position="449"/>
    </location>
</feature>
<feature type="domain" description="PPIase FKBP-type" evidence="1">
    <location>
        <begin position="172"/>
        <end position="257"/>
    </location>
</feature>
<comment type="function">
    <text evidence="1">Involved in protein export. Acts as a chaperone by maintaining the newly synthesized protein in an open conformation. Functions as a peptidyl-prolyl cis-trans isomerase.</text>
</comment>
<comment type="catalytic activity">
    <reaction evidence="1">
        <text>[protein]-peptidylproline (omega=180) = [protein]-peptidylproline (omega=0)</text>
        <dbReference type="Rhea" id="RHEA:16237"/>
        <dbReference type="Rhea" id="RHEA-COMP:10747"/>
        <dbReference type="Rhea" id="RHEA-COMP:10748"/>
        <dbReference type="ChEBI" id="CHEBI:83833"/>
        <dbReference type="ChEBI" id="CHEBI:83834"/>
        <dbReference type="EC" id="5.2.1.8"/>
    </reaction>
</comment>
<comment type="subcellular location">
    <subcellularLocation>
        <location>Cytoplasm</location>
    </subcellularLocation>
    <text evidence="1">About half TF is bound to the ribosome near the polypeptide exit tunnel while the other half is free in the cytoplasm.</text>
</comment>
<comment type="domain">
    <text evidence="1">Consists of 3 domains; the N-terminus binds the ribosome, the middle domain has PPIase activity, while the C-terminus has intrinsic chaperone activity on its own.</text>
</comment>
<comment type="similarity">
    <text evidence="1">Belongs to the FKBP-type PPIase family. Tig subfamily.</text>
</comment>
<sequence length="449" mass="50067">MSTVIENLGKLDRKVTLAVPKAEVEQEKQSRLARLSKTVKMSGFRPGKVPMKMVEKQYGQQVEMEVRFDKAARQFFDITNEQGVKVAGQPRFELKSEGVADDQFAFDATFEVYPEVKIGDLAGAELTRTKTEITDAEIDKTIDILRKQRVHYHPRGEAGDHGDGGEAVAQNGDRVTVDFVGTIDGVEFAGGKAEGFGFVLGEGRMLPEFEQATLGLKQGESKVFPLAFPADYHGKDVAGKTAEFTVTLKQVEWAHLPEINGAFAQSLGIADGSLDKMRADIRENLEREVKRRTHALLKDQVMDALLKVAELDVPKSLIEQDQERLVEMARRDLEARGMPNVKNMPIPAEMFAQQAERRVKLGLVLAEVVKVNALEAKPEQIKAEIEEFAKSYEDPKEVIRWYYGDQQRLAEMEAYVLENNVVNFVCDKAKVADKAMSFEELTATQGAQG</sequence>
<dbReference type="EC" id="5.2.1.8" evidence="1"/>
<dbReference type="EMBL" id="AL646052">
    <property type="protein sequence ID" value="CAD15412.1"/>
    <property type="molecule type" value="Genomic_DNA"/>
</dbReference>
<dbReference type="RefSeq" id="WP_011001651.1">
    <property type="nucleotide sequence ID" value="NC_003295.1"/>
</dbReference>
<dbReference type="SMR" id="Q8XYP8"/>
<dbReference type="STRING" id="267608.RSc1710"/>
<dbReference type="EnsemblBacteria" id="CAD15412">
    <property type="protein sequence ID" value="CAD15412"/>
    <property type="gene ID" value="RSc1710"/>
</dbReference>
<dbReference type="KEGG" id="rso:RSc1710"/>
<dbReference type="eggNOG" id="COG0544">
    <property type="taxonomic scope" value="Bacteria"/>
</dbReference>
<dbReference type="HOGENOM" id="CLU_033058_2_0_4"/>
<dbReference type="Proteomes" id="UP000001436">
    <property type="component" value="Chromosome"/>
</dbReference>
<dbReference type="GO" id="GO:0005737">
    <property type="term" value="C:cytoplasm"/>
    <property type="evidence" value="ECO:0007669"/>
    <property type="project" value="UniProtKB-SubCell"/>
</dbReference>
<dbReference type="GO" id="GO:0003755">
    <property type="term" value="F:peptidyl-prolyl cis-trans isomerase activity"/>
    <property type="evidence" value="ECO:0007669"/>
    <property type="project" value="UniProtKB-UniRule"/>
</dbReference>
<dbReference type="GO" id="GO:0044183">
    <property type="term" value="F:protein folding chaperone"/>
    <property type="evidence" value="ECO:0007669"/>
    <property type="project" value="TreeGrafter"/>
</dbReference>
<dbReference type="GO" id="GO:0043022">
    <property type="term" value="F:ribosome binding"/>
    <property type="evidence" value="ECO:0007669"/>
    <property type="project" value="TreeGrafter"/>
</dbReference>
<dbReference type="GO" id="GO:0051083">
    <property type="term" value="P:'de novo' cotranslational protein folding"/>
    <property type="evidence" value="ECO:0007669"/>
    <property type="project" value="TreeGrafter"/>
</dbReference>
<dbReference type="GO" id="GO:0051301">
    <property type="term" value="P:cell division"/>
    <property type="evidence" value="ECO:0007669"/>
    <property type="project" value="UniProtKB-KW"/>
</dbReference>
<dbReference type="GO" id="GO:0061077">
    <property type="term" value="P:chaperone-mediated protein folding"/>
    <property type="evidence" value="ECO:0007669"/>
    <property type="project" value="TreeGrafter"/>
</dbReference>
<dbReference type="GO" id="GO:0015031">
    <property type="term" value="P:protein transport"/>
    <property type="evidence" value="ECO:0007669"/>
    <property type="project" value="UniProtKB-UniRule"/>
</dbReference>
<dbReference type="GO" id="GO:0043335">
    <property type="term" value="P:protein unfolding"/>
    <property type="evidence" value="ECO:0007669"/>
    <property type="project" value="TreeGrafter"/>
</dbReference>
<dbReference type="FunFam" id="3.10.50.40:FF:000001">
    <property type="entry name" value="Trigger factor"/>
    <property type="match status" value="1"/>
</dbReference>
<dbReference type="Gene3D" id="3.10.50.40">
    <property type="match status" value="1"/>
</dbReference>
<dbReference type="Gene3D" id="3.30.70.1050">
    <property type="entry name" value="Trigger factor ribosome-binding domain"/>
    <property type="match status" value="1"/>
</dbReference>
<dbReference type="Gene3D" id="1.10.3120.10">
    <property type="entry name" value="Trigger factor, C-terminal domain"/>
    <property type="match status" value="1"/>
</dbReference>
<dbReference type="HAMAP" id="MF_00303">
    <property type="entry name" value="Trigger_factor_Tig"/>
    <property type="match status" value="1"/>
</dbReference>
<dbReference type="InterPro" id="IPR046357">
    <property type="entry name" value="PPIase_dom_sf"/>
</dbReference>
<dbReference type="InterPro" id="IPR001179">
    <property type="entry name" value="PPIase_FKBP_dom"/>
</dbReference>
<dbReference type="InterPro" id="IPR005215">
    <property type="entry name" value="Trig_fac"/>
</dbReference>
<dbReference type="InterPro" id="IPR008880">
    <property type="entry name" value="Trigger_fac_C"/>
</dbReference>
<dbReference type="InterPro" id="IPR037041">
    <property type="entry name" value="Trigger_fac_C_sf"/>
</dbReference>
<dbReference type="InterPro" id="IPR008881">
    <property type="entry name" value="Trigger_fac_ribosome-bd_bac"/>
</dbReference>
<dbReference type="InterPro" id="IPR036611">
    <property type="entry name" value="Trigger_fac_ribosome-bd_sf"/>
</dbReference>
<dbReference type="InterPro" id="IPR027304">
    <property type="entry name" value="Trigger_fact/SurA_dom_sf"/>
</dbReference>
<dbReference type="NCBIfam" id="TIGR00115">
    <property type="entry name" value="tig"/>
    <property type="match status" value="1"/>
</dbReference>
<dbReference type="PANTHER" id="PTHR30560">
    <property type="entry name" value="TRIGGER FACTOR CHAPERONE AND PEPTIDYL-PROLYL CIS/TRANS ISOMERASE"/>
    <property type="match status" value="1"/>
</dbReference>
<dbReference type="PANTHER" id="PTHR30560:SF3">
    <property type="entry name" value="TRIGGER FACTOR-LIKE PROTEIN TIG, CHLOROPLASTIC"/>
    <property type="match status" value="1"/>
</dbReference>
<dbReference type="Pfam" id="PF00254">
    <property type="entry name" value="FKBP_C"/>
    <property type="match status" value="1"/>
</dbReference>
<dbReference type="Pfam" id="PF05698">
    <property type="entry name" value="Trigger_C"/>
    <property type="match status" value="1"/>
</dbReference>
<dbReference type="Pfam" id="PF05697">
    <property type="entry name" value="Trigger_N"/>
    <property type="match status" value="1"/>
</dbReference>
<dbReference type="PIRSF" id="PIRSF003095">
    <property type="entry name" value="Trigger_factor"/>
    <property type="match status" value="1"/>
</dbReference>
<dbReference type="SUPFAM" id="SSF54534">
    <property type="entry name" value="FKBP-like"/>
    <property type="match status" value="1"/>
</dbReference>
<dbReference type="SUPFAM" id="SSF109998">
    <property type="entry name" value="Triger factor/SurA peptide-binding domain-like"/>
    <property type="match status" value="1"/>
</dbReference>
<dbReference type="SUPFAM" id="SSF102735">
    <property type="entry name" value="Trigger factor ribosome-binding domain"/>
    <property type="match status" value="1"/>
</dbReference>
<dbReference type="PROSITE" id="PS50059">
    <property type="entry name" value="FKBP_PPIASE"/>
    <property type="match status" value="1"/>
</dbReference>
<organism>
    <name type="scientific">Ralstonia nicotianae (strain ATCC BAA-1114 / GMI1000)</name>
    <name type="common">Ralstonia solanacearum</name>
    <dbReference type="NCBI Taxonomy" id="267608"/>
    <lineage>
        <taxon>Bacteria</taxon>
        <taxon>Pseudomonadati</taxon>
        <taxon>Pseudomonadota</taxon>
        <taxon>Betaproteobacteria</taxon>
        <taxon>Burkholderiales</taxon>
        <taxon>Burkholderiaceae</taxon>
        <taxon>Ralstonia</taxon>
        <taxon>Ralstonia solanacearum species complex</taxon>
    </lineage>
</organism>
<protein>
    <recommendedName>
        <fullName evidence="1">Trigger factor</fullName>
        <shortName evidence="1">TF</shortName>
        <ecNumber evidence="1">5.2.1.8</ecNumber>
    </recommendedName>
    <alternativeName>
        <fullName evidence="1">PPIase</fullName>
    </alternativeName>
</protein>
<gene>
    <name evidence="1" type="primary">tig</name>
    <name type="ordered locus">RSc1710</name>
    <name type="ORF">RS02896</name>
</gene>
<reference key="1">
    <citation type="journal article" date="2002" name="Nature">
        <title>Genome sequence of the plant pathogen Ralstonia solanacearum.</title>
        <authorList>
            <person name="Salanoubat M."/>
            <person name="Genin S."/>
            <person name="Artiguenave F."/>
            <person name="Gouzy J."/>
            <person name="Mangenot S."/>
            <person name="Arlat M."/>
            <person name="Billault A."/>
            <person name="Brottier P."/>
            <person name="Camus J.-C."/>
            <person name="Cattolico L."/>
            <person name="Chandler M."/>
            <person name="Choisne N."/>
            <person name="Claudel-Renard C."/>
            <person name="Cunnac S."/>
            <person name="Demange N."/>
            <person name="Gaspin C."/>
            <person name="Lavie M."/>
            <person name="Moisan A."/>
            <person name="Robert C."/>
            <person name="Saurin W."/>
            <person name="Schiex T."/>
            <person name="Siguier P."/>
            <person name="Thebault P."/>
            <person name="Whalen M."/>
            <person name="Wincker P."/>
            <person name="Levy M."/>
            <person name="Weissenbach J."/>
            <person name="Boucher C.A."/>
        </authorList>
    </citation>
    <scope>NUCLEOTIDE SEQUENCE [LARGE SCALE GENOMIC DNA]</scope>
    <source>
        <strain>ATCC BAA-1114 / GMI1000</strain>
    </source>
</reference>